<comment type="function">
    <text evidence="2">Involved in the synthesis of the atypical nucleotide dZTP (2-amino-2'-deoxyadenosine-5'-triphosphate). Catalyzes the condensation of aspartate with deoxyguanylate into dSMP (N6-succino-2-amino-2'-deoxyadenylate), which undergoes defumarylation and phosphorylation respectively by host PurB and guanylate/nucleoside diphosphate kinases to give dZTP. dZTP is integrated into the viral genome instead of adenine by the viral DNA polymerase. This Z-base probably completely replaces adenosine and forms a triple bond to the opposite T-base. The resulting non-standard viral DNA is called Z-genome. The chemically modified DNA is probably harder for the host bacteria to digest with nucleases or restriction enzymes.</text>
</comment>
<comment type="catalytic activity">
    <reaction evidence="2 3">
        <text>dGMP + L-aspartate + ATP = (2S)-2-amino-2'-deoxyadenylo-succinate + ADP + phosphate + 2 H(+)</text>
        <dbReference type="Rhea" id="RHEA:67628"/>
        <dbReference type="ChEBI" id="CHEBI:15378"/>
        <dbReference type="ChEBI" id="CHEBI:29991"/>
        <dbReference type="ChEBI" id="CHEBI:30616"/>
        <dbReference type="ChEBI" id="CHEBI:43474"/>
        <dbReference type="ChEBI" id="CHEBI:57673"/>
        <dbReference type="ChEBI" id="CHEBI:172924"/>
        <dbReference type="ChEBI" id="CHEBI:456216"/>
        <dbReference type="EC" id="6.3.4.25"/>
    </reaction>
    <physiologicalReaction direction="left-to-right" evidence="5">
        <dbReference type="Rhea" id="RHEA:67629"/>
    </physiologicalReaction>
</comment>
<comment type="cofactor">
    <cofactor evidence="2">
        <name>Mg(2+)</name>
        <dbReference type="ChEBI" id="CHEBI:18420"/>
    </cofactor>
</comment>
<comment type="biophysicochemical properties">
    <kinetics>
        <KM evidence="3">1.6 uM for dGMP</KM>
        <KM evidence="3">12.6 uM for ATP</KM>
        <KM evidence="3">40.4 uM for Asp</KM>
    </kinetics>
</comment>
<comment type="pathway">
    <text evidence="2">Purine metabolism.</text>
</comment>
<comment type="similarity">
    <text evidence="2">Belongs to the Caudovirales PurZ family.</text>
</comment>
<evidence type="ECO:0000250" key="1">
    <source>
        <dbReference type="UniProtKB" id="G3FFN6"/>
    </source>
</evidence>
<evidence type="ECO:0000255" key="2">
    <source>
        <dbReference type="HAMAP-Rule" id="MF_04166"/>
    </source>
</evidence>
<evidence type="ECO:0000269" key="3">
    <source>
    </source>
</evidence>
<evidence type="ECO:0000305" key="4"/>
<evidence type="ECO:0000305" key="5">
    <source>
    </source>
</evidence>
<protein>
    <recommendedName>
        <fullName evidence="1 2">N6-succino-2-amino-2'-deoxyadenylate synthase</fullName>
        <ecNumber evidence="2 3">6.3.4.25</ecNumber>
    </recommendedName>
    <alternativeName>
        <fullName evidence="4">2-amino-2'-deoxyadenylo-succinate synthase</fullName>
    </alternativeName>
    <alternativeName>
        <fullName evidence="2">PurZ</fullName>
    </alternativeName>
</protein>
<organism>
    <name type="scientific">Salmonella phage PMBT28</name>
    <dbReference type="NCBI Taxonomy" id="2081904"/>
    <lineage>
        <taxon>Viruses</taxon>
        <taxon>Duplodnaviria</taxon>
        <taxon>Heunggongvirae</taxon>
        <taxon>Uroviricota</taxon>
        <taxon>Caudoviricetes</taxon>
    </lineage>
</organism>
<organismHost>
    <name type="scientific">Salmonella enterica</name>
    <name type="common">Salmonella choleraesuis</name>
    <dbReference type="NCBI Taxonomy" id="28901"/>
</organismHost>
<sequence length="367" mass="40309">MNSNKKATIVVDAQFGSTGKGLIAGYLAERDQPDVVMTAWSANAGHTYINAEGRKFVHCMLANGIVSPKLTTVLIGPGSQMNAELLRDEILSCADLLQGKTILLHASAALILQKHVEEEAGPMTKIGSTKKGCGAAMIAKIRRNPDDNNTVGANGDYMEEHIYGPVREAGVFIRTATNAEYMAVVYDAERIQVEGAQGFSLGINNGFYPYVTSRECTPAQVAVDVNLPLAFIDKVVACMRTLPIRVANRYNDKGEQIGWSGPCYPDQKELDWEKDLGMEAELTTVTKLPRRIFTFSYEQTKAALEVIRPDEVFLNFCNYLEPDEVAAVIGTIERAAHELKVPGPMPLARYYGYGPTVNDIDLDMRHQ</sequence>
<reference key="1">
    <citation type="journal article" date="2018" name="Genome Announc.">
        <title>Complete Genome Sequence of the Novel Virulent Phage PMBT28 with Lytic Activity against Thermotolerant Salmonella enterica subsp. enterica Serovar Senftenberg ATCC 43845.</title>
        <authorList>
            <person name="Koberg S."/>
            <person name="Brinks E."/>
            <person name="Albrecht V."/>
            <person name="Neve H."/>
            <person name="Franz C.M.A.P."/>
        </authorList>
    </citation>
    <scope>NUCLEOTIDE SEQUENCE [LARGE SCALE GENOMIC DNA]</scope>
</reference>
<reference key="2">
    <citation type="journal article" date="2021" name="Science">
        <title>A widespread pathway for substitution of adenine by diaminopurine in phage genomes.</title>
        <authorList>
            <person name="Zhou Y."/>
            <person name="Xu X."/>
            <person name="Wei Y."/>
            <person name="Cheng Y."/>
            <person name="Guo Y."/>
            <person name="Khudyakov I."/>
            <person name="Liu F."/>
            <person name="He P."/>
            <person name="Song Z."/>
            <person name="Li Z."/>
            <person name="Gao Y."/>
            <person name="Ang E.L."/>
            <person name="Zhao H."/>
            <person name="Zhang Y."/>
            <person name="Zhao S."/>
        </authorList>
    </citation>
    <scope>BIOPHYSICOCHEMICAL PROPERTIES</scope>
    <scope>CATALYTIC ACTIVITY</scope>
    <scope>ACTIVE SITE</scope>
</reference>
<keyword id="KW-0067">ATP-binding</keyword>
<keyword id="KW-0436">Ligase</keyword>
<keyword id="KW-0460">Magnesium</keyword>
<keyword id="KW-0479">Metal-binding</keyword>
<keyword id="KW-0547">Nucleotide-binding</keyword>
<keyword id="KW-0658">Purine biosynthesis</keyword>
<keyword id="KW-1185">Reference proteome</keyword>
<accession>A0A2L0V130</accession>
<feature type="chain" id="PRO_0000453691" description="N6-succino-2-amino-2'-deoxyadenylate synthase">
    <location>
        <begin position="1"/>
        <end position="367"/>
    </location>
</feature>
<feature type="active site" description="Proton acceptor" evidence="2 5">
    <location>
        <position position="17"/>
    </location>
</feature>
<feature type="binding site" evidence="2">
    <location>
        <position position="17"/>
    </location>
    <ligand>
        <name>ATP</name>
        <dbReference type="ChEBI" id="CHEBI:30616"/>
    </ligand>
</feature>
<feature type="binding site" evidence="2">
    <location>
        <position position="17"/>
    </location>
    <ligand>
        <name>dGMP</name>
        <dbReference type="ChEBI" id="CHEBI:57673"/>
    </ligand>
</feature>
<feature type="binding site" evidence="2">
    <location>
        <position position="17"/>
    </location>
    <ligand>
        <name>Mg(2+)</name>
        <dbReference type="ChEBI" id="CHEBI:18420"/>
    </ligand>
</feature>
<feature type="binding site" evidence="2">
    <location>
        <position position="18"/>
    </location>
    <ligand>
        <name>ATP</name>
        <dbReference type="ChEBI" id="CHEBI:30616"/>
    </ligand>
</feature>
<feature type="binding site" evidence="2">
    <location>
        <position position="19"/>
    </location>
    <ligand>
        <name>ATP</name>
        <dbReference type="ChEBI" id="CHEBI:30616"/>
    </ligand>
</feature>
<feature type="binding site" evidence="2">
    <location>
        <position position="20"/>
    </location>
    <ligand>
        <name>ATP</name>
        <dbReference type="ChEBI" id="CHEBI:30616"/>
    </ligand>
</feature>
<feature type="binding site" evidence="2">
    <location>
        <position position="21"/>
    </location>
    <ligand>
        <name>ATP</name>
        <dbReference type="ChEBI" id="CHEBI:30616"/>
    </ligand>
</feature>
<feature type="binding site" evidence="2">
    <location>
        <position position="43"/>
    </location>
    <ligand>
        <name>dGMP</name>
        <dbReference type="ChEBI" id="CHEBI:57673"/>
    </ligand>
</feature>
<feature type="binding site" evidence="2">
    <location>
        <position position="45"/>
    </location>
    <ligand>
        <name>ATP</name>
        <dbReference type="ChEBI" id="CHEBI:30616"/>
    </ligand>
</feature>
<feature type="binding site" evidence="2">
    <location>
        <position position="45"/>
    </location>
    <ligand>
        <name>Mg(2+)</name>
        <dbReference type="ChEBI" id="CHEBI:18420"/>
    </ligand>
</feature>
<feature type="binding site" evidence="2">
    <location>
        <position position="46"/>
    </location>
    <ligand>
        <name>ATP</name>
        <dbReference type="ChEBI" id="CHEBI:30616"/>
    </ligand>
</feature>
<feature type="binding site" evidence="2">
    <location>
        <position position="47"/>
    </location>
    <ligand>
        <name>ATP</name>
        <dbReference type="ChEBI" id="CHEBI:30616"/>
    </ligand>
</feature>
<feature type="binding site" evidence="2">
    <location>
        <position position="128"/>
    </location>
    <ligand>
        <name>dGMP</name>
        <dbReference type="ChEBI" id="CHEBI:57673"/>
    </ligand>
</feature>
<feature type="binding site" evidence="2">
    <location>
        <position position="129"/>
    </location>
    <ligand>
        <name>dGMP</name>
        <dbReference type="ChEBI" id="CHEBI:57673"/>
    </ligand>
</feature>
<feature type="binding site" evidence="2">
    <location>
        <position position="143"/>
    </location>
    <ligand>
        <name>dGMP</name>
        <dbReference type="ChEBI" id="CHEBI:57673"/>
    </ligand>
</feature>
<feature type="binding site" evidence="2">
    <location>
        <position position="197"/>
    </location>
    <ligand>
        <name>ATP</name>
        <dbReference type="ChEBI" id="CHEBI:30616"/>
    </ligand>
</feature>
<feature type="binding site" evidence="2">
    <location>
        <position position="212"/>
    </location>
    <ligand>
        <name>dGMP</name>
        <dbReference type="ChEBI" id="CHEBI:57673"/>
    </ligand>
</feature>
<feature type="binding site" evidence="2">
    <location>
        <position position="284"/>
    </location>
    <ligand>
        <name>L-aspartate</name>
        <dbReference type="ChEBI" id="CHEBI:29991"/>
    </ligand>
</feature>
<feature type="binding site" evidence="2">
    <location>
        <position position="284"/>
    </location>
    <ligand>
        <name>Mg(2+)</name>
        <dbReference type="ChEBI" id="CHEBI:18420"/>
    </ligand>
</feature>
<feature type="binding site" evidence="2">
    <location>
        <position position="285"/>
    </location>
    <ligand>
        <name>L-aspartate</name>
        <dbReference type="ChEBI" id="CHEBI:29991"/>
    </ligand>
</feature>
<feature type="binding site" evidence="2">
    <location>
        <position position="290"/>
    </location>
    <ligand>
        <name>L-aspartate</name>
        <dbReference type="ChEBI" id="CHEBI:29991"/>
    </ligand>
</feature>
<feature type="binding site" evidence="2">
    <location>
        <position position="315"/>
    </location>
    <ligand>
        <name>ATP</name>
        <dbReference type="ChEBI" id="CHEBI:30616"/>
    </ligand>
</feature>
<feature type="binding site" evidence="2">
    <location>
        <position position="318"/>
    </location>
    <ligand>
        <name>ATP</name>
        <dbReference type="ChEBI" id="CHEBI:30616"/>
    </ligand>
</feature>
<feature type="binding site" evidence="2">
    <location>
        <position position="354"/>
    </location>
    <ligand>
        <name>ATP</name>
        <dbReference type="ChEBI" id="CHEBI:30616"/>
    </ligand>
</feature>
<proteinExistence type="evidence at protein level"/>
<name>PURZ_BPPMB</name>
<dbReference type="EC" id="6.3.4.25" evidence="2 3"/>
<dbReference type="EMBL" id="MG641885">
    <property type="protein sequence ID" value="AUZ95522.1"/>
    <property type="molecule type" value="Genomic_DNA"/>
</dbReference>
<dbReference type="SMR" id="A0A2L0V130"/>
<dbReference type="Proteomes" id="UP000241443">
    <property type="component" value="Genome"/>
</dbReference>
<dbReference type="GO" id="GO:0004019">
    <property type="term" value="F:adenylosuccinate synthase activity"/>
    <property type="evidence" value="ECO:0007669"/>
    <property type="project" value="InterPro"/>
</dbReference>
<dbReference type="GO" id="GO:0005524">
    <property type="term" value="F:ATP binding"/>
    <property type="evidence" value="ECO:0007669"/>
    <property type="project" value="UniProtKB-UniRule"/>
</dbReference>
<dbReference type="GO" id="GO:0000287">
    <property type="term" value="F:magnesium ion binding"/>
    <property type="evidence" value="ECO:0007669"/>
    <property type="project" value="UniProtKB-UniRule"/>
</dbReference>
<dbReference type="GO" id="GO:0044208">
    <property type="term" value="P:'de novo' AMP biosynthetic process"/>
    <property type="evidence" value="ECO:0007669"/>
    <property type="project" value="TreeGrafter"/>
</dbReference>
<dbReference type="GO" id="GO:0046040">
    <property type="term" value="P:IMP metabolic process"/>
    <property type="evidence" value="ECO:0007669"/>
    <property type="project" value="TreeGrafter"/>
</dbReference>
<dbReference type="Gene3D" id="3.40.440.10">
    <property type="entry name" value="Adenylosuccinate Synthetase, subunit A, domain 1"/>
    <property type="match status" value="2"/>
</dbReference>
<dbReference type="HAMAP" id="MF_04166">
    <property type="entry name" value="Phage_PURZ"/>
    <property type="match status" value="1"/>
</dbReference>
<dbReference type="InterPro" id="IPR042109">
    <property type="entry name" value="Adenylosuccinate_synth_dom1"/>
</dbReference>
<dbReference type="InterPro" id="IPR001114">
    <property type="entry name" value="Adenylosuccinate_synthetase"/>
</dbReference>
<dbReference type="InterPro" id="IPR027417">
    <property type="entry name" value="P-loop_NTPase"/>
</dbReference>
<dbReference type="InterPro" id="IPR046383">
    <property type="entry name" value="Phage_PurZ"/>
</dbReference>
<dbReference type="NCBIfam" id="NF038379">
    <property type="entry name" value="amino_Aden_PurZ"/>
    <property type="match status" value="1"/>
</dbReference>
<dbReference type="PANTHER" id="PTHR11846">
    <property type="entry name" value="ADENYLOSUCCINATE SYNTHETASE"/>
    <property type="match status" value="1"/>
</dbReference>
<dbReference type="PANTHER" id="PTHR11846:SF0">
    <property type="entry name" value="ADENYLOSUCCINATE SYNTHETASE"/>
    <property type="match status" value="1"/>
</dbReference>
<dbReference type="Pfam" id="PF00709">
    <property type="entry name" value="Adenylsucc_synt"/>
    <property type="match status" value="2"/>
</dbReference>
<dbReference type="SMART" id="SM00788">
    <property type="entry name" value="Adenylsucc_synt"/>
    <property type="match status" value="1"/>
</dbReference>
<dbReference type="SUPFAM" id="SSF52540">
    <property type="entry name" value="P-loop containing nucleoside triphosphate hydrolases"/>
    <property type="match status" value="1"/>
</dbReference>
<gene>
    <name evidence="2" type="primary">purZ</name>
</gene>